<keyword id="KW-0227">DNA damage</keyword>
<keyword id="KW-0234">DNA repair</keyword>
<keyword id="KW-0255">Endonuclease</keyword>
<keyword id="KW-0378">Hydrolase</keyword>
<keyword id="KW-0479">Metal-binding</keyword>
<keyword id="KW-0540">Nuclease</keyword>
<keyword id="KW-1185">Reference proteome</keyword>
<keyword id="KW-0862">Zinc</keyword>
<protein>
    <recommendedName>
        <fullName evidence="1">Probable endonuclease 4</fullName>
        <ecNumber evidence="1">3.1.21.2</ecNumber>
    </recommendedName>
    <alternativeName>
        <fullName evidence="1">Endodeoxyribonuclease IV</fullName>
    </alternativeName>
    <alternativeName>
        <fullName evidence="1">Endonuclease IV</fullName>
    </alternativeName>
</protein>
<sequence length="303" mass="34704">MDKYNLIIGSHVSLKAKDFFYGSVKEALSYGSNTFMVYTGAPQNTKRQPIKSFKIEEAHNLLKKHNINLDDLIVHAPYIINPCSSKKNVRELAKEFLIQEIQRTESMGITKLVLHPGSRLEQNEDIALEQVYTMLNDIFSTINTNVIVCLETMAGKGSEIGVNIKQLKTIIDNVHSKKNIGVCLDTCHMNDSGLILDYYNFNQYLKEFDAQIGINYIKVLHINDSKNPCGANKDRHENLGYGTIGFANLINIIYHPLLNNIPKILETPWFNVNDELIPLYKHEIKMIRDCKWYDIKNKLLSKK</sequence>
<gene>
    <name evidence="1" type="primary">nfo</name>
    <name type="ordered locus">UU306</name>
</gene>
<evidence type="ECO:0000255" key="1">
    <source>
        <dbReference type="HAMAP-Rule" id="MF_00152"/>
    </source>
</evidence>
<organism>
    <name type="scientific">Ureaplasma parvum serovar 3 (strain ATCC 700970)</name>
    <dbReference type="NCBI Taxonomy" id="273119"/>
    <lineage>
        <taxon>Bacteria</taxon>
        <taxon>Bacillati</taxon>
        <taxon>Mycoplasmatota</taxon>
        <taxon>Mycoplasmoidales</taxon>
        <taxon>Mycoplasmoidaceae</taxon>
        <taxon>Ureaplasma</taxon>
    </lineage>
</organism>
<name>END4_UREPA</name>
<reference key="1">
    <citation type="journal article" date="2000" name="Nature">
        <title>The complete sequence of the mucosal pathogen Ureaplasma urealyticum.</title>
        <authorList>
            <person name="Glass J.I."/>
            <person name="Lefkowitz E.J."/>
            <person name="Glass J.S."/>
            <person name="Heiner C.R."/>
            <person name="Chen E.Y."/>
            <person name="Cassell G.H."/>
        </authorList>
    </citation>
    <scope>NUCLEOTIDE SEQUENCE [LARGE SCALE GENOMIC DNA]</scope>
    <source>
        <strain>ATCC 700970</strain>
    </source>
</reference>
<proteinExistence type="inferred from homology"/>
<feature type="chain" id="PRO_0000190883" description="Probable endonuclease 4">
    <location>
        <begin position="1"/>
        <end position="303"/>
    </location>
</feature>
<feature type="binding site" evidence="1">
    <location>
        <position position="75"/>
    </location>
    <ligand>
        <name>Zn(2+)</name>
        <dbReference type="ChEBI" id="CHEBI:29105"/>
        <label>1</label>
    </ligand>
</feature>
<feature type="binding site" evidence="1">
    <location>
        <position position="115"/>
    </location>
    <ligand>
        <name>Zn(2+)</name>
        <dbReference type="ChEBI" id="CHEBI:29105"/>
        <label>1</label>
    </ligand>
</feature>
<feature type="binding site" evidence="1">
    <location>
        <position position="151"/>
    </location>
    <ligand>
        <name>Zn(2+)</name>
        <dbReference type="ChEBI" id="CHEBI:29105"/>
        <label>1</label>
    </ligand>
</feature>
<feature type="binding site" evidence="1">
    <location>
        <position position="151"/>
    </location>
    <ligand>
        <name>Zn(2+)</name>
        <dbReference type="ChEBI" id="CHEBI:29105"/>
        <label>2</label>
    </ligand>
</feature>
<feature type="binding site" evidence="1">
    <location>
        <position position="185"/>
    </location>
    <ligand>
        <name>Zn(2+)</name>
        <dbReference type="ChEBI" id="CHEBI:29105"/>
        <label>2</label>
    </ligand>
</feature>
<feature type="binding site" evidence="1">
    <location>
        <position position="188"/>
    </location>
    <ligand>
        <name>Zn(2+)</name>
        <dbReference type="ChEBI" id="CHEBI:29105"/>
        <label>3</label>
    </ligand>
</feature>
<feature type="binding site" evidence="1">
    <location>
        <position position="221"/>
    </location>
    <ligand>
        <name>Zn(2+)</name>
        <dbReference type="ChEBI" id="CHEBI:29105"/>
        <label>2</label>
    </ligand>
</feature>
<feature type="binding site" evidence="1">
    <location>
        <position position="234"/>
    </location>
    <ligand>
        <name>Zn(2+)</name>
        <dbReference type="ChEBI" id="CHEBI:29105"/>
        <label>3</label>
    </ligand>
</feature>
<feature type="binding site" evidence="1">
    <location>
        <position position="236"/>
    </location>
    <ligand>
        <name>Zn(2+)</name>
        <dbReference type="ChEBI" id="CHEBI:29105"/>
        <label>3</label>
    </ligand>
</feature>
<feature type="binding site" evidence="1">
    <location>
        <position position="266"/>
    </location>
    <ligand>
        <name>Zn(2+)</name>
        <dbReference type="ChEBI" id="CHEBI:29105"/>
        <label>2</label>
    </ligand>
</feature>
<dbReference type="EC" id="3.1.21.2" evidence="1"/>
<dbReference type="EMBL" id="AF222894">
    <property type="protein sequence ID" value="AAF30715.1"/>
    <property type="molecule type" value="Genomic_DNA"/>
</dbReference>
<dbReference type="RefSeq" id="WP_010891729.1">
    <property type="nucleotide sequence ID" value="NC_002162.1"/>
</dbReference>
<dbReference type="SMR" id="Q9PQI5"/>
<dbReference type="STRING" id="273119.UU306"/>
<dbReference type="EnsemblBacteria" id="AAF30715">
    <property type="protein sequence ID" value="AAF30715"/>
    <property type="gene ID" value="UU306"/>
</dbReference>
<dbReference type="GeneID" id="29672536"/>
<dbReference type="KEGG" id="uur:UU306"/>
<dbReference type="PATRIC" id="fig|273119.6.peg.319"/>
<dbReference type="eggNOG" id="COG0648">
    <property type="taxonomic scope" value="Bacteria"/>
</dbReference>
<dbReference type="HOGENOM" id="CLU_025885_4_1_14"/>
<dbReference type="OrthoDB" id="9805666at2"/>
<dbReference type="Proteomes" id="UP000000423">
    <property type="component" value="Chromosome"/>
</dbReference>
<dbReference type="GO" id="GO:0008833">
    <property type="term" value="F:deoxyribonuclease IV (phage-T4-induced) activity"/>
    <property type="evidence" value="ECO:0007669"/>
    <property type="project" value="UniProtKB-UniRule"/>
</dbReference>
<dbReference type="GO" id="GO:0003677">
    <property type="term" value="F:DNA binding"/>
    <property type="evidence" value="ECO:0007669"/>
    <property type="project" value="InterPro"/>
</dbReference>
<dbReference type="GO" id="GO:0003906">
    <property type="term" value="F:DNA-(apurinic or apyrimidinic site) endonuclease activity"/>
    <property type="evidence" value="ECO:0007669"/>
    <property type="project" value="TreeGrafter"/>
</dbReference>
<dbReference type="GO" id="GO:0008081">
    <property type="term" value="F:phosphoric diester hydrolase activity"/>
    <property type="evidence" value="ECO:0007669"/>
    <property type="project" value="TreeGrafter"/>
</dbReference>
<dbReference type="GO" id="GO:0008270">
    <property type="term" value="F:zinc ion binding"/>
    <property type="evidence" value="ECO:0007669"/>
    <property type="project" value="UniProtKB-UniRule"/>
</dbReference>
<dbReference type="GO" id="GO:0006284">
    <property type="term" value="P:base-excision repair"/>
    <property type="evidence" value="ECO:0007669"/>
    <property type="project" value="TreeGrafter"/>
</dbReference>
<dbReference type="CDD" id="cd00019">
    <property type="entry name" value="AP2Ec"/>
    <property type="match status" value="1"/>
</dbReference>
<dbReference type="FunFam" id="3.20.20.150:FF:000001">
    <property type="entry name" value="Probable endonuclease 4"/>
    <property type="match status" value="1"/>
</dbReference>
<dbReference type="Gene3D" id="3.20.20.150">
    <property type="entry name" value="Divalent-metal-dependent TIM barrel enzymes"/>
    <property type="match status" value="1"/>
</dbReference>
<dbReference type="HAMAP" id="MF_00152">
    <property type="entry name" value="Nfo"/>
    <property type="match status" value="1"/>
</dbReference>
<dbReference type="InterPro" id="IPR001719">
    <property type="entry name" value="AP_endonuc_2"/>
</dbReference>
<dbReference type="InterPro" id="IPR018246">
    <property type="entry name" value="AP_endonuc_F2_Zn_BS"/>
</dbReference>
<dbReference type="InterPro" id="IPR036237">
    <property type="entry name" value="Xyl_isomerase-like_sf"/>
</dbReference>
<dbReference type="InterPro" id="IPR013022">
    <property type="entry name" value="Xyl_isomerase-like_TIM-brl"/>
</dbReference>
<dbReference type="NCBIfam" id="TIGR00587">
    <property type="entry name" value="nfo"/>
    <property type="match status" value="1"/>
</dbReference>
<dbReference type="NCBIfam" id="NF002196">
    <property type="entry name" value="PRK01060.1-1"/>
    <property type="match status" value="1"/>
</dbReference>
<dbReference type="PANTHER" id="PTHR21445:SF0">
    <property type="entry name" value="APURINIC-APYRIMIDINIC ENDONUCLEASE"/>
    <property type="match status" value="1"/>
</dbReference>
<dbReference type="PANTHER" id="PTHR21445">
    <property type="entry name" value="ENDONUCLEASE IV ENDODEOXYRIBONUCLEASE IV"/>
    <property type="match status" value="1"/>
</dbReference>
<dbReference type="Pfam" id="PF01261">
    <property type="entry name" value="AP_endonuc_2"/>
    <property type="match status" value="1"/>
</dbReference>
<dbReference type="SMART" id="SM00518">
    <property type="entry name" value="AP2Ec"/>
    <property type="match status" value="1"/>
</dbReference>
<dbReference type="SUPFAM" id="SSF51658">
    <property type="entry name" value="Xylose isomerase-like"/>
    <property type="match status" value="1"/>
</dbReference>
<dbReference type="PROSITE" id="PS00729">
    <property type="entry name" value="AP_NUCLEASE_F2_1"/>
    <property type="match status" value="1"/>
</dbReference>
<dbReference type="PROSITE" id="PS00730">
    <property type="entry name" value="AP_NUCLEASE_F2_2"/>
    <property type="match status" value="1"/>
</dbReference>
<dbReference type="PROSITE" id="PS00731">
    <property type="entry name" value="AP_NUCLEASE_F2_3"/>
    <property type="match status" value="1"/>
</dbReference>
<dbReference type="PROSITE" id="PS51432">
    <property type="entry name" value="AP_NUCLEASE_F2_4"/>
    <property type="match status" value="1"/>
</dbReference>
<comment type="function">
    <text evidence="1">Endonuclease IV plays a role in DNA repair. It cleaves phosphodiester bonds at apurinic or apyrimidinic (AP) sites, generating a 3'-hydroxyl group and a 5'-terminal sugar phosphate.</text>
</comment>
<comment type="catalytic activity">
    <reaction evidence="1">
        <text>Endonucleolytic cleavage to 5'-phosphooligonucleotide end-products.</text>
        <dbReference type="EC" id="3.1.21.2"/>
    </reaction>
</comment>
<comment type="cofactor">
    <cofactor evidence="1">
        <name>Zn(2+)</name>
        <dbReference type="ChEBI" id="CHEBI:29105"/>
    </cofactor>
    <text evidence="1">Binds 3 Zn(2+) ions.</text>
</comment>
<comment type="similarity">
    <text evidence="1">Belongs to the AP endonuclease 2 family.</text>
</comment>
<accession>Q9PQI5</accession>